<gene>
    <name type="primary">GAL12</name>
</gene>
<dbReference type="EMBL" id="AY621314">
    <property type="protein sequence ID" value="AAT45552.1"/>
    <property type="molecule type" value="mRNA"/>
</dbReference>
<dbReference type="EMBL" id="AY621327">
    <property type="protein sequence ID" value="AAT48936.1"/>
    <property type="molecule type" value="Genomic_DNA"/>
</dbReference>
<dbReference type="EMBL" id="AY534898">
    <property type="protein sequence ID" value="AAS99321.1"/>
    <property type="molecule type" value="mRNA"/>
</dbReference>
<dbReference type="EMBL" id="DQ677643">
    <property type="protein sequence ID" value="ABG73377.1"/>
    <property type="molecule type" value="mRNA"/>
</dbReference>
<dbReference type="EMBL" id="DQ858309">
    <property type="protein sequence ID" value="ABI48224.1"/>
    <property type="molecule type" value="mRNA"/>
</dbReference>
<dbReference type="EMBL" id="DQ858322">
    <property type="protein sequence ID" value="ABI48238.1"/>
    <property type="molecule type" value="mRNA"/>
</dbReference>
<dbReference type="EMBL" id="DQ858335">
    <property type="protein sequence ID" value="ABI48251.1"/>
    <property type="molecule type" value="mRNA"/>
</dbReference>
<dbReference type="EMBL" id="DQ858349">
    <property type="protein sequence ID" value="ABI48265.1"/>
    <property type="molecule type" value="mRNA"/>
</dbReference>
<dbReference type="EMBL" id="EF044309">
    <property type="protein sequence ID" value="ABK41477.1"/>
    <property type="molecule type" value="Genomic_DNA"/>
</dbReference>
<dbReference type="RefSeq" id="NP_001001607.2">
    <property type="nucleotide sequence ID" value="NM_001001607.2"/>
</dbReference>
<dbReference type="STRING" id="9031.ENSGALP00000030909"/>
<dbReference type="GlyGen" id="Q6QLQ7">
    <property type="glycosylation" value="1 site"/>
</dbReference>
<dbReference type="PaxDb" id="9031-ENSGALP00000030909"/>
<dbReference type="KEGG" id="gga:414339"/>
<dbReference type="VEuPathDB" id="HostDB:geneid_414339"/>
<dbReference type="eggNOG" id="ENOG502TD9N">
    <property type="taxonomic scope" value="Eukaryota"/>
</dbReference>
<dbReference type="HOGENOM" id="CLU_2849122_0_0_1"/>
<dbReference type="InParanoid" id="Q6QLQ7"/>
<dbReference type="PRO" id="PR:Q6QLQ7"/>
<dbReference type="Proteomes" id="UP000000539">
    <property type="component" value="Unassembled WGS sequence"/>
</dbReference>
<dbReference type="GO" id="GO:0005576">
    <property type="term" value="C:extracellular region"/>
    <property type="evidence" value="ECO:0007669"/>
    <property type="project" value="UniProtKB-SubCell"/>
</dbReference>
<dbReference type="GO" id="GO:0042742">
    <property type="term" value="P:defense response to bacterium"/>
    <property type="evidence" value="ECO:0007669"/>
    <property type="project" value="UniProtKB-KW"/>
</dbReference>
<dbReference type="SUPFAM" id="SSF57392">
    <property type="entry name" value="Defensin-like"/>
    <property type="match status" value="1"/>
</dbReference>
<keyword id="KW-0044">Antibiotic</keyword>
<keyword id="KW-0929">Antimicrobial</keyword>
<keyword id="KW-0211">Defensin</keyword>
<keyword id="KW-1015">Disulfide bond</keyword>
<keyword id="KW-1185">Reference proteome</keyword>
<keyword id="KW-0964">Secreted</keyword>
<keyword id="KW-0732">Signal</keyword>
<evidence type="ECO:0000250" key="1"/>
<evidence type="ECO:0000255" key="2"/>
<evidence type="ECO:0000269" key="3">
    <source>
    </source>
</evidence>
<evidence type="ECO:0000269" key="4">
    <source>
    </source>
</evidence>
<evidence type="ECO:0000269" key="5">
    <source>
    </source>
</evidence>
<evidence type="ECO:0000269" key="6">
    <source ref="3"/>
</evidence>
<evidence type="ECO:0000305" key="7"/>
<reference key="1">
    <citation type="journal article" date="2004" name="BMC Genomics">
        <title>A genome-wide screen identifies a single beta-defensin gene cluster in the chicken: implications for the origin and evolution of mammalian defensins.</title>
        <authorList>
            <person name="Xiao Y."/>
            <person name="Hughes A.L."/>
            <person name="Ando J."/>
            <person name="Matsuda Y."/>
            <person name="Cheng J.-F."/>
            <person name="Skinner-Noble D."/>
            <person name="Zhang G."/>
        </authorList>
    </citation>
    <scope>NUCLEOTIDE SEQUENCE [GENOMIC DNA / MRNA]</scope>
    <scope>TISSUE SPECIFICITY</scope>
</reference>
<reference key="2">
    <citation type="journal article" date="2004" name="Immunogenetics">
        <title>Bioinformatic discovery and initial characterisation of nine novel antimicrobial peptide genes in the chicken.</title>
        <authorList>
            <person name="Lynn D.J."/>
            <person name="Higgs R."/>
            <person name="Gaines S."/>
            <person name="Tierney J."/>
            <person name="James T."/>
            <person name="Lloyd A.T."/>
            <person name="Fares M.A."/>
            <person name="Mulcahy G."/>
            <person name="O'Farrelly C."/>
        </authorList>
    </citation>
    <scope>NUCLEOTIDE SEQUENCE [MRNA]</scope>
    <scope>TISSUE SPECIFICITY</scope>
    <source>
        <tissue>Testis</tissue>
    </source>
</reference>
<reference key="3">
    <citation type="submission" date="2006-07" db="EMBL/GenBank/DDBJ databases">
        <title>Chicken beta-defensin in China chicken breeds.</title>
        <authorList>
            <person name="Chen Y."/>
            <person name="Cao Y."/>
            <person name="Xie Q."/>
            <person name="Bi Y."/>
            <person name="Chen J."/>
        </authorList>
    </citation>
    <scope>NUCLEOTIDE SEQUENCE [MRNA]</scope>
    <scope>VARIANT ARG-27</scope>
    <source>
        <strain>Guangxi Huang</strain>
        <strain>Huiyang bearded</strain>
        <strain>Qingyuan Ma</strain>
        <strain>Taihe silkies</strain>
        <strain>Xinghua</strain>
    </source>
</reference>
<reference key="4">
    <citation type="submission" date="2006-10" db="EMBL/GenBank/DDBJ databases">
        <title>Chicken GAL12 mature peptide fusion protein: gene construction, expression and purification.</title>
        <authorList>
            <person name="Kang X."/>
            <person name="Jiang R."/>
            <person name="Li G."/>
            <person name="Chen H."/>
            <person name="Sun G."/>
            <person name="Han R."/>
            <person name="Chen Q."/>
        </authorList>
    </citation>
    <scope>NUCLEOTIDE SEQUENCE [GENOMIC DNA] OF 21-65</scope>
</reference>
<reference key="5">
    <citation type="journal article" date="2007" name="Reproduction">
        <title>Changes in the expression of gallinacins, antimicrobial peptides, in ovarian follicles during follicular growth and in response to lipopolysaccharide in laying hens (Gallus domesticus).</title>
        <authorList>
            <person name="Subedi K."/>
            <person name="Isobe N."/>
            <person name="Nishibori M."/>
            <person name="Yoshimura Y."/>
        </authorList>
    </citation>
    <scope>TISSUE SPECIFICITY</scope>
    <scope>DEVELOPMENTAL STAGE</scope>
    <scope>INDUCTION</scope>
</reference>
<organism>
    <name type="scientific">Gallus gallus</name>
    <name type="common">Chicken</name>
    <dbReference type="NCBI Taxonomy" id="9031"/>
    <lineage>
        <taxon>Eukaryota</taxon>
        <taxon>Metazoa</taxon>
        <taxon>Chordata</taxon>
        <taxon>Craniata</taxon>
        <taxon>Vertebrata</taxon>
        <taxon>Euteleostomi</taxon>
        <taxon>Archelosauria</taxon>
        <taxon>Archosauria</taxon>
        <taxon>Dinosauria</taxon>
        <taxon>Saurischia</taxon>
        <taxon>Theropoda</taxon>
        <taxon>Coelurosauria</taxon>
        <taxon>Aves</taxon>
        <taxon>Neognathae</taxon>
        <taxon>Galloanserae</taxon>
        <taxon>Galliformes</taxon>
        <taxon>Phasianidae</taxon>
        <taxon>Phasianinae</taxon>
        <taxon>Gallus</taxon>
    </lineage>
</organism>
<feature type="signal peptide" evidence="2">
    <location>
        <begin position="1"/>
        <end position="19"/>
    </location>
</feature>
<feature type="chain" id="PRO_0000288576" description="Gallinacin-12">
    <location>
        <begin position="20"/>
        <end position="65"/>
    </location>
</feature>
<feature type="disulfide bond" evidence="1">
    <location>
        <begin position="25"/>
        <end position="54"/>
    </location>
</feature>
<feature type="disulfide bond" evidence="1">
    <location>
        <begin position="32"/>
        <end position="47"/>
    </location>
</feature>
<feature type="disulfide bond" evidence="1">
    <location>
        <begin position="37"/>
        <end position="55"/>
    </location>
</feature>
<feature type="sequence variant" description="In strain: Taihe silkies." evidence="6">
    <original>H</original>
    <variation>R</variation>
    <location>
        <position position="27"/>
    </location>
</feature>
<feature type="sequence conflict" description="In Ref. 1; AAT45552." evidence="7" ref="1">
    <original>C</original>
    <variation>S</variation>
    <location>
        <position position="32"/>
    </location>
</feature>
<name>GLL12_CHICK</name>
<comment type="function">
    <text evidence="1">Has bactericidal activity.</text>
</comment>
<comment type="subcellular location">
    <subcellularLocation>
        <location>Secreted</location>
    </subcellularLocation>
    <subcellularLocation>
        <location evidence="1">Cytoplasmic granule</location>
    </subcellularLocation>
</comment>
<comment type="tissue specificity">
    <text evidence="3 4 5">Expressed in the large intestine, kidney liver, gall bladder, testis, ovary and male and female reproductive tracts. Expressed in the ovarian stroma and the theca and granulosa layers of the ovarian follicle.</text>
</comment>
<comment type="developmental stage">
    <text evidence="5">Detected in the theca and granulosa layers of the ovarian follicle in the white follicle (WF), F1, F3, F5, and postovulatory follicle stages.</text>
</comment>
<comment type="induction">
    <text evidence="5">Induced in the theca layer of the F3 stage ovarian follicle by intravenous injection of LPS. Repressed in the granulosa layer of the F3 stage ovarian follicle by intravenous injection of LPS.</text>
</comment>
<comment type="similarity">
    <text evidence="7">Belongs to the beta-defensin family.</text>
</comment>
<protein>
    <recommendedName>
        <fullName>Gallinacin-12</fullName>
        <shortName>Gal-12</shortName>
    </recommendedName>
    <alternativeName>
        <fullName>Beta-defensin 12</fullName>
    </alternativeName>
    <alternativeName>
        <fullName>Gallinacin-10</fullName>
        <shortName>Gal-10</shortName>
    </alternativeName>
</protein>
<proteinExistence type="evidence at transcript level"/>
<accession>Q6QLQ7</accession>
<accession>A0MV42</accession>
<accession>Q0PWG3</accession>
<accession>Q6IV19</accession>
<sequence length="65" mass="7187">MRNLCFVFIFISLLAHGSTHGPDSCNHDRGLCRVGNCNPGEYLAKYCFEPVILCCKPLSPTPTKT</sequence>